<reference key="1">
    <citation type="journal article" date="2004" name="Cancer Res.">
        <title>C-type lectin-like molecule-1: a novel myeloid cell surface marker associated with acute myeloid leukemia.</title>
        <authorList>
            <person name="Bakker A.B.H."/>
            <person name="van den Oudenrijn S."/>
            <person name="Bakker A.Q."/>
            <person name="Feller N."/>
            <person name="van Meijer M."/>
            <person name="Bia J.A."/>
            <person name="Jongeneelen M.A.C."/>
            <person name="Visser T.J."/>
            <person name="Bijl N."/>
            <person name="Geuijen C.A.W."/>
            <person name="Marissen W.E."/>
            <person name="Radosevic K."/>
            <person name="Throsby M."/>
            <person name="Schuurhuis G.J."/>
            <person name="Ossenkoppele G.J."/>
            <person name="de Kruif J."/>
            <person name="Goudsmit J."/>
            <person name="Kruisbeek A.M."/>
        </authorList>
    </citation>
    <scope>NUCLEOTIDE SEQUENCE [MRNA] (ISOFORM 1)</scope>
    <scope>SUBCELLULAR LOCATION</scope>
    <scope>TISSUE SPECIFICITY</scope>
    <source>
        <tissue>Bone marrow</tissue>
    </source>
</reference>
<reference key="2">
    <citation type="journal article" date="2004" name="J. Biol. Chem.">
        <title>Identification and characterization of a novel human myeloid inhibitory C-type lectin-like receptor (MICL) that is predominantly expressed on granulocytes and monocytes.</title>
        <authorList>
            <person name="Marshall A.S.J."/>
            <person name="Willment J.A."/>
            <person name="Lin H.-H."/>
            <person name="Williams D.L."/>
            <person name="Gordon S."/>
            <person name="Brown G.D."/>
        </authorList>
    </citation>
    <scope>NUCLEOTIDE SEQUENCE [MRNA] (ISOFORMS 2; 3 AND 4)</scope>
    <scope>FUNCTION</scope>
    <scope>INTERACTION WITH PTPN6 AND PTPN11</scope>
    <scope>SUBCELLULAR LOCATION</scope>
    <scope>GLYCOSYLATION</scope>
    <scope>TISSUE SPECIFICITY</scope>
    <scope>VARIANT GLN-244</scope>
</reference>
<reference key="3">
    <citation type="journal article" date="2004" name="Blood">
        <title>KLRL1, a novel killer cell lectinlike receptor, inhibits natural killer cell cytotoxicity.</title>
        <authorList>
            <person name="Han Y."/>
            <person name="Zhang M."/>
            <person name="Li N."/>
            <person name="Chen T."/>
            <person name="Zhang Y."/>
            <person name="Wan T."/>
            <person name="Cao X."/>
        </authorList>
    </citation>
    <scope>NUCLEOTIDE SEQUENCE [MRNA] (ISOFORM 2)</scope>
    <scope>FUNCTION</scope>
    <scope>SUBCELLULAR LOCATION</scope>
    <scope>TISSUE SPECIFICITY</scope>
    <scope>GLYCOSYLATION</scope>
    <scope>PHOSPHORYLATION</scope>
    <scope>VARIANT GLN-244</scope>
</reference>
<reference key="4">
    <citation type="journal article" date="2006" name="Blood">
        <title>Dendritic-cell-associated C-type lectin 2 (DCAL-2) alters dendritic-cell maturation and cytokine production.</title>
        <authorList>
            <person name="Chen C.-H."/>
            <person name="Floyd H."/>
            <person name="Olson N.E."/>
            <person name="Magaletti D."/>
            <person name="Li C."/>
            <person name="Draves K."/>
            <person name="Clark E.A."/>
        </authorList>
    </citation>
    <scope>NUCLEOTIDE SEQUENCE [MRNA] (ISOFORM 2)</scope>
    <scope>FUNCTION</scope>
    <scope>SUBCELLULAR LOCATION</scope>
    <scope>TISSUE SPECIFICITY</scope>
    <scope>VARIANT GLN-244</scope>
</reference>
<reference key="5">
    <citation type="journal article" date="2004" name="Nat. Genet.">
        <title>Complete sequencing and characterization of 21,243 full-length human cDNAs.</title>
        <authorList>
            <person name="Ota T."/>
            <person name="Suzuki Y."/>
            <person name="Nishikawa T."/>
            <person name="Otsuki T."/>
            <person name="Sugiyama T."/>
            <person name="Irie R."/>
            <person name="Wakamatsu A."/>
            <person name="Hayashi K."/>
            <person name="Sato H."/>
            <person name="Nagai K."/>
            <person name="Kimura K."/>
            <person name="Makita H."/>
            <person name="Sekine M."/>
            <person name="Obayashi M."/>
            <person name="Nishi T."/>
            <person name="Shibahara T."/>
            <person name="Tanaka T."/>
            <person name="Ishii S."/>
            <person name="Yamamoto J."/>
            <person name="Saito K."/>
            <person name="Kawai Y."/>
            <person name="Isono Y."/>
            <person name="Nakamura Y."/>
            <person name="Nagahari K."/>
            <person name="Murakami K."/>
            <person name="Yasuda T."/>
            <person name="Iwayanagi T."/>
            <person name="Wagatsuma M."/>
            <person name="Shiratori A."/>
            <person name="Sudo H."/>
            <person name="Hosoiri T."/>
            <person name="Kaku Y."/>
            <person name="Kodaira H."/>
            <person name="Kondo H."/>
            <person name="Sugawara M."/>
            <person name="Takahashi M."/>
            <person name="Kanda K."/>
            <person name="Yokoi T."/>
            <person name="Furuya T."/>
            <person name="Kikkawa E."/>
            <person name="Omura Y."/>
            <person name="Abe K."/>
            <person name="Kamihara K."/>
            <person name="Katsuta N."/>
            <person name="Sato K."/>
            <person name="Tanikawa M."/>
            <person name="Yamazaki M."/>
            <person name="Ninomiya K."/>
            <person name="Ishibashi T."/>
            <person name="Yamashita H."/>
            <person name="Murakawa K."/>
            <person name="Fujimori K."/>
            <person name="Tanai H."/>
            <person name="Kimata M."/>
            <person name="Watanabe M."/>
            <person name="Hiraoka S."/>
            <person name="Chiba Y."/>
            <person name="Ishida S."/>
            <person name="Ono Y."/>
            <person name="Takiguchi S."/>
            <person name="Watanabe S."/>
            <person name="Yosida M."/>
            <person name="Hotuta T."/>
            <person name="Kusano J."/>
            <person name="Kanehori K."/>
            <person name="Takahashi-Fujii A."/>
            <person name="Hara H."/>
            <person name="Tanase T.-O."/>
            <person name="Nomura Y."/>
            <person name="Togiya S."/>
            <person name="Komai F."/>
            <person name="Hara R."/>
            <person name="Takeuchi K."/>
            <person name="Arita M."/>
            <person name="Imose N."/>
            <person name="Musashino K."/>
            <person name="Yuuki H."/>
            <person name="Oshima A."/>
            <person name="Sasaki N."/>
            <person name="Aotsuka S."/>
            <person name="Yoshikawa Y."/>
            <person name="Matsunawa H."/>
            <person name="Ichihara T."/>
            <person name="Shiohata N."/>
            <person name="Sano S."/>
            <person name="Moriya S."/>
            <person name="Momiyama H."/>
            <person name="Satoh N."/>
            <person name="Takami S."/>
            <person name="Terashima Y."/>
            <person name="Suzuki O."/>
            <person name="Nakagawa S."/>
            <person name="Senoh A."/>
            <person name="Mizoguchi H."/>
            <person name="Goto Y."/>
            <person name="Shimizu F."/>
            <person name="Wakebe H."/>
            <person name="Hishigaki H."/>
            <person name="Watanabe T."/>
            <person name="Sugiyama A."/>
            <person name="Takemoto M."/>
            <person name="Kawakami B."/>
            <person name="Yamazaki M."/>
            <person name="Watanabe K."/>
            <person name="Kumagai A."/>
            <person name="Itakura S."/>
            <person name="Fukuzumi Y."/>
            <person name="Fujimori Y."/>
            <person name="Komiyama M."/>
            <person name="Tashiro H."/>
            <person name="Tanigami A."/>
            <person name="Fujiwara T."/>
            <person name="Ono T."/>
            <person name="Yamada K."/>
            <person name="Fujii Y."/>
            <person name="Ozaki K."/>
            <person name="Hirao M."/>
            <person name="Ohmori Y."/>
            <person name="Kawabata A."/>
            <person name="Hikiji T."/>
            <person name="Kobatake N."/>
            <person name="Inagaki H."/>
            <person name="Ikema Y."/>
            <person name="Okamoto S."/>
            <person name="Okitani R."/>
            <person name="Kawakami T."/>
            <person name="Noguchi S."/>
            <person name="Itoh T."/>
            <person name="Shigeta K."/>
            <person name="Senba T."/>
            <person name="Matsumura K."/>
            <person name="Nakajima Y."/>
            <person name="Mizuno T."/>
            <person name="Morinaga M."/>
            <person name="Sasaki M."/>
            <person name="Togashi T."/>
            <person name="Oyama M."/>
            <person name="Hata H."/>
            <person name="Watanabe M."/>
            <person name="Komatsu T."/>
            <person name="Mizushima-Sugano J."/>
            <person name="Satoh T."/>
            <person name="Shirai Y."/>
            <person name="Takahashi Y."/>
            <person name="Nakagawa K."/>
            <person name="Okumura K."/>
            <person name="Nagase T."/>
            <person name="Nomura N."/>
            <person name="Kikuchi H."/>
            <person name="Masuho Y."/>
            <person name="Yamashita R."/>
            <person name="Nakai K."/>
            <person name="Yada T."/>
            <person name="Nakamura Y."/>
            <person name="Ohara O."/>
            <person name="Isogai T."/>
            <person name="Sugano S."/>
        </authorList>
    </citation>
    <scope>NUCLEOTIDE SEQUENCE [LARGE SCALE MRNA] (ISOFORM 2)</scope>
    <scope>VARIANT GLN-244</scope>
    <source>
        <tissue>Lung</tissue>
    </source>
</reference>
<reference key="6">
    <citation type="journal article" date="2006" name="Nature">
        <title>The finished DNA sequence of human chromosome 12.</title>
        <authorList>
            <person name="Scherer S.E."/>
            <person name="Muzny D.M."/>
            <person name="Buhay C.J."/>
            <person name="Chen R."/>
            <person name="Cree A."/>
            <person name="Ding Y."/>
            <person name="Dugan-Rocha S."/>
            <person name="Gill R."/>
            <person name="Gunaratne P."/>
            <person name="Harris R.A."/>
            <person name="Hawes A.C."/>
            <person name="Hernandez J."/>
            <person name="Hodgson A.V."/>
            <person name="Hume J."/>
            <person name="Jackson A."/>
            <person name="Khan Z.M."/>
            <person name="Kovar-Smith C."/>
            <person name="Lewis L.R."/>
            <person name="Lozado R.J."/>
            <person name="Metzker M.L."/>
            <person name="Milosavljevic A."/>
            <person name="Miner G.R."/>
            <person name="Montgomery K.T."/>
            <person name="Morgan M.B."/>
            <person name="Nazareth L.V."/>
            <person name="Scott G."/>
            <person name="Sodergren E."/>
            <person name="Song X.-Z."/>
            <person name="Steffen D."/>
            <person name="Lovering R.C."/>
            <person name="Wheeler D.A."/>
            <person name="Worley K.C."/>
            <person name="Yuan Y."/>
            <person name="Zhang Z."/>
            <person name="Adams C.Q."/>
            <person name="Ansari-Lari M.A."/>
            <person name="Ayele M."/>
            <person name="Brown M.J."/>
            <person name="Chen G."/>
            <person name="Chen Z."/>
            <person name="Clerc-Blankenburg K.P."/>
            <person name="Davis C."/>
            <person name="Delgado O."/>
            <person name="Dinh H.H."/>
            <person name="Draper H."/>
            <person name="Gonzalez-Garay M.L."/>
            <person name="Havlak P."/>
            <person name="Jackson L.R."/>
            <person name="Jacob L.S."/>
            <person name="Kelly S.H."/>
            <person name="Li L."/>
            <person name="Li Z."/>
            <person name="Liu J."/>
            <person name="Liu W."/>
            <person name="Lu J."/>
            <person name="Maheshwari M."/>
            <person name="Nguyen B.-V."/>
            <person name="Okwuonu G.O."/>
            <person name="Pasternak S."/>
            <person name="Perez L.M."/>
            <person name="Plopper F.J.H."/>
            <person name="Santibanez J."/>
            <person name="Shen H."/>
            <person name="Tabor P.E."/>
            <person name="Verduzco D."/>
            <person name="Waldron L."/>
            <person name="Wang Q."/>
            <person name="Williams G.A."/>
            <person name="Zhang J."/>
            <person name="Zhou J."/>
            <person name="Allen C.C."/>
            <person name="Amin A.G."/>
            <person name="Anyalebechi V."/>
            <person name="Bailey M."/>
            <person name="Barbaria J.A."/>
            <person name="Bimage K.E."/>
            <person name="Bryant N.P."/>
            <person name="Burch P.E."/>
            <person name="Burkett C.E."/>
            <person name="Burrell K.L."/>
            <person name="Calderon E."/>
            <person name="Cardenas V."/>
            <person name="Carter K."/>
            <person name="Casias K."/>
            <person name="Cavazos I."/>
            <person name="Cavazos S.R."/>
            <person name="Ceasar H."/>
            <person name="Chacko J."/>
            <person name="Chan S.N."/>
            <person name="Chavez D."/>
            <person name="Christopoulos C."/>
            <person name="Chu J."/>
            <person name="Cockrell R."/>
            <person name="Cox C.D."/>
            <person name="Dang M."/>
            <person name="Dathorne S.R."/>
            <person name="David R."/>
            <person name="Davis C.M."/>
            <person name="Davy-Carroll L."/>
            <person name="Deshazo D.R."/>
            <person name="Donlin J.E."/>
            <person name="D'Souza L."/>
            <person name="Eaves K.A."/>
            <person name="Egan A."/>
            <person name="Emery-Cohen A.J."/>
            <person name="Escotto M."/>
            <person name="Flagg N."/>
            <person name="Forbes L.D."/>
            <person name="Gabisi A.M."/>
            <person name="Garza M."/>
            <person name="Hamilton C."/>
            <person name="Henderson N."/>
            <person name="Hernandez O."/>
            <person name="Hines S."/>
            <person name="Hogues M.E."/>
            <person name="Huang M."/>
            <person name="Idlebird D.G."/>
            <person name="Johnson R."/>
            <person name="Jolivet A."/>
            <person name="Jones S."/>
            <person name="Kagan R."/>
            <person name="King L.M."/>
            <person name="Leal B."/>
            <person name="Lebow H."/>
            <person name="Lee S."/>
            <person name="LeVan J.M."/>
            <person name="Lewis L.C."/>
            <person name="London P."/>
            <person name="Lorensuhewa L.M."/>
            <person name="Loulseged H."/>
            <person name="Lovett D.A."/>
            <person name="Lucier A."/>
            <person name="Lucier R.L."/>
            <person name="Ma J."/>
            <person name="Madu R.C."/>
            <person name="Mapua P."/>
            <person name="Martindale A.D."/>
            <person name="Martinez E."/>
            <person name="Massey E."/>
            <person name="Mawhiney S."/>
            <person name="Meador M.G."/>
            <person name="Mendez S."/>
            <person name="Mercado C."/>
            <person name="Mercado I.C."/>
            <person name="Merritt C.E."/>
            <person name="Miner Z.L."/>
            <person name="Minja E."/>
            <person name="Mitchell T."/>
            <person name="Mohabbat F."/>
            <person name="Mohabbat K."/>
            <person name="Montgomery B."/>
            <person name="Moore N."/>
            <person name="Morris S."/>
            <person name="Munidasa M."/>
            <person name="Ngo R.N."/>
            <person name="Nguyen N.B."/>
            <person name="Nickerson E."/>
            <person name="Nwaokelemeh O.O."/>
            <person name="Nwokenkwo S."/>
            <person name="Obregon M."/>
            <person name="Oguh M."/>
            <person name="Oragunye N."/>
            <person name="Oviedo R.J."/>
            <person name="Parish B.J."/>
            <person name="Parker D.N."/>
            <person name="Parrish J."/>
            <person name="Parks K.L."/>
            <person name="Paul H.A."/>
            <person name="Payton B.A."/>
            <person name="Perez A."/>
            <person name="Perrin W."/>
            <person name="Pickens A."/>
            <person name="Primus E.L."/>
            <person name="Pu L.-L."/>
            <person name="Puazo M."/>
            <person name="Quiles M.M."/>
            <person name="Quiroz J.B."/>
            <person name="Rabata D."/>
            <person name="Reeves K."/>
            <person name="Ruiz S.J."/>
            <person name="Shao H."/>
            <person name="Sisson I."/>
            <person name="Sonaike T."/>
            <person name="Sorelle R.P."/>
            <person name="Sutton A.E."/>
            <person name="Svatek A.F."/>
            <person name="Svetz L.A."/>
            <person name="Tamerisa K.S."/>
            <person name="Taylor T.R."/>
            <person name="Teague B."/>
            <person name="Thomas N."/>
            <person name="Thorn R.D."/>
            <person name="Trejos Z.Y."/>
            <person name="Trevino B.K."/>
            <person name="Ukegbu O.N."/>
            <person name="Urban J.B."/>
            <person name="Vasquez L.I."/>
            <person name="Vera V.A."/>
            <person name="Villasana D.M."/>
            <person name="Wang L."/>
            <person name="Ward-Moore S."/>
            <person name="Warren J.T."/>
            <person name="Wei X."/>
            <person name="White F."/>
            <person name="Williamson A.L."/>
            <person name="Wleczyk R."/>
            <person name="Wooden H.S."/>
            <person name="Wooden S.H."/>
            <person name="Yen J."/>
            <person name="Yoon L."/>
            <person name="Yoon V."/>
            <person name="Zorrilla S.E."/>
            <person name="Nelson D."/>
            <person name="Kucherlapati R."/>
            <person name="Weinstock G."/>
            <person name="Gibbs R.A."/>
        </authorList>
    </citation>
    <scope>NUCLEOTIDE SEQUENCE [LARGE SCALE GENOMIC DNA]</scope>
</reference>
<reference key="7">
    <citation type="submission" date="2005-07" db="EMBL/GenBank/DDBJ databases">
        <authorList>
            <person name="Mural R.J."/>
            <person name="Istrail S."/>
            <person name="Sutton G.G."/>
            <person name="Florea L."/>
            <person name="Halpern A.L."/>
            <person name="Mobarry C.M."/>
            <person name="Lippert R."/>
            <person name="Walenz B."/>
            <person name="Shatkay H."/>
            <person name="Dew I."/>
            <person name="Miller J.R."/>
            <person name="Flanigan M.J."/>
            <person name="Edwards N.J."/>
            <person name="Bolanos R."/>
            <person name="Fasulo D."/>
            <person name="Halldorsson B.V."/>
            <person name="Hannenhalli S."/>
            <person name="Turner R."/>
            <person name="Yooseph S."/>
            <person name="Lu F."/>
            <person name="Nusskern D.R."/>
            <person name="Shue B.C."/>
            <person name="Zheng X.H."/>
            <person name="Zhong F."/>
            <person name="Delcher A.L."/>
            <person name="Huson D.H."/>
            <person name="Kravitz S.A."/>
            <person name="Mouchard L."/>
            <person name="Reinert K."/>
            <person name="Remington K.A."/>
            <person name="Clark A.G."/>
            <person name="Waterman M.S."/>
            <person name="Eichler E.E."/>
            <person name="Adams M.D."/>
            <person name="Hunkapiller M.W."/>
            <person name="Myers E.W."/>
            <person name="Venter J.C."/>
        </authorList>
    </citation>
    <scope>NUCLEOTIDE SEQUENCE [LARGE SCALE GENOMIC DNA]</scope>
    <scope>VARIANT GLN-244</scope>
</reference>
<reference key="8">
    <citation type="journal article" date="2004" name="Genome Res.">
        <title>The status, quality, and expansion of the NIH full-length cDNA project: the Mammalian Gene Collection (MGC).</title>
        <authorList>
            <consortium name="The MGC Project Team"/>
        </authorList>
    </citation>
    <scope>NUCLEOTIDE SEQUENCE [LARGE SCALE MRNA] (ISOFORMS 2 AND 5)</scope>
    <scope>VARIANT GLN-244</scope>
    <source>
        <tissue>Blood</tissue>
    </source>
</reference>
<reference key="9">
    <citation type="journal article" date="2005" name="J. Proteome Res.">
        <title>Human plasma N-glycoproteome analysis by immunoaffinity subtraction, hydrazide chemistry, and mass spectrometry.</title>
        <authorList>
            <person name="Liu T."/>
            <person name="Qian W.-J."/>
            <person name="Gritsenko M.A."/>
            <person name="Camp D.G. II"/>
            <person name="Monroe M.E."/>
            <person name="Moore R.J."/>
            <person name="Smith R.D."/>
        </authorList>
    </citation>
    <scope>GLYCOSYLATION [LARGE SCALE ANALYSIS] AT ASN-98</scope>
    <source>
        <tissue>Plasma</tissue>
    </source>
</reference>
<reference key="10">
    <citation type="journal article" date="2006" name="Eur. J. Immunol.">
        <title>Human MICL (CLEC12A) is differentially glycosylated and is down-regulated following cellular activation.</title>
        <authorList>
            <person name="Marshall A.S.J."/>
            <person name="Willment J.A."/>
            <person name="Pyz E."/>
            <person name="Dennehy K.M."/>
            <person name="Reid D.M."/>
            <person name="Dri P."/>
            <person name="Gordon S."/>
            <person name="Wong S.Y.C."/>
            <person name="Brown G.D."/>
        </authorList>
    </citation>
    <scope>GLYCOSYLATION</scope>
    <scope>INDUCTION</scope>
    <scope>SUBCELLULAR LOCATION</scope>
    <scope>TISSUE SPECIFICITY</scope>
</reference>
<reference key="11">
    <citation type="journal article" date="2019" name="Cell Rep.">
        <title>The C-type lectin receptor CLEC12A recognizes plasmodial hemozoin and contributes to cerebral malaria development.</title>
        <authorList>
            <person name="Raulf M.K."/>
            <person name="Johannssen T."/>
            <person name="Matthiesen S."/>
            <person name="Neumann K."/>
            <person name="Hachenberg S."/>
            <person name="Mayer-Lambertz S."/>
            <person name="Steinbeis F."/>
            <person name="Hegermann J."/>
            <person name="Seeberger P.H."/>
            <person name="Baumgaertner W."/>
            <person name="Strube C."/>
            <person name="Ruland J."/>
            <person name="Lepenies B."/>
        </authorList>
    </citation>
    <scope>FUNCTION</scope>
</reference>
<reference key="12">
    <citation type="journal article" date="2021" name="Front. Immunol.">
        <title>The inhibitory receptor CLEC12A regulates PI3K-Akt signaling to inhibit neutrophil activation and cytokine release.</title>
        <authorList>
            <person name="Pare G."/>
            <person name="Vitry J."/>
            <person name="Merchant M.L."/>
            <person name="Vaillancourt M."/>
            <person name="Murru A."/>
            <person name="Shen Y."/>
            <person name="Elowe S."/>
            <person name="Lahoud M.H."/>
            <person name="Naccache P.H."/>
            <person name="McLeish K.R."/>
            <person name="Fernandes M.J."/>
        </authorList>
    </citation>
    <scope>FUNCTION</scope>
    <scope>SUBCELLULAR LOCATION</scope>
    <scope>PHOSPHORYLATION AT TYR-7</scope>
    <scope>MUTAGENESIS OF TYR-7</scope>
</reference>
<reference key="13">
    <citation type="journal article" date="2023" name="Tuberculosis">
        <title>Mycobacterial mycolic acids trigger inhibitory receptor Clec12A to suppress host immune responses.</title>
        <authorList>
            <person name="Nishimura N."/>
            <person name="Tomiyasu N."/>
            <person name="Torigoe S."/>
            <person name="Mizuno S."/>
            <person name="Fukano H."/>
            <person name="Ishikawa E."/>
            <person name="Katano H."/>
            <person name="Hoshino Y."/>
            <person name="Matsuo K."/>
            <person name="Takahashi M."/>
            <person name="Izumi Y."/>
            <person name="Bamba T."/>
            <person name="Akashi K."/>
            <person name="Yamasaki S."/>
        </authorList>
    </citation>
    <scope>FUNCTION</scope>
</reference>
<reference key="14">
    <citation type="journal article" date="2024" name="Nature">
        <title>Recognition and control of neutrophil extracellular trap formation by MICL.</title>
        <authorList>
            <person name="Malamud M."/>
            <person name="Whitehead L."/>
            <person name="McIntosh A."/>
            <person name="Colella F."/>
            <person name="Roelofs A.J."/>
            <person name="Kusakabe T."/>
            <person name="Dambuza I.M."/>
            <person name="Phillips-Brookes A."/>
            <person name="Salazar F."/>
            <person name="Perez F."/>
            <person name="Shoesmith R."/>
            <person name="Zakrzewski P."/>
            <person name="Sey E.A."/>
            <person name="Rodrigues C."/>
            <person name="Morvay P.L."/>
            <person name="Redelinghuys P."/>
            <person name="Bedekovic T."/>
            <person name="Fernandes M.J.G."/>
            <person name="Almizraq R."/>
            <person name="Branch D.R."/>
            <person name="Amulic B."/>
            <person name="Harvey J."/>
            <person name="Stewart D."/>
            <person name="Yuecel R."/>
            <person name="Reid D.M."/>
            <person name="McConnachie A."/>
            <person name="Pickering M.C."/>
            <person name="Botto M."/>
            <person name="Iliev I.D."/>
            <person name="McInnes I.B."/>
            <person name="De Bari C."/>
            <person name="Willment J.A."/>
            <person name="Brown G.D."/>
        </authorList>
    </citation>
    <scope>FUNCTION</scope>
</reference>
<reference evidence="28 29" key="15">
    <citation type="journal article" date="2024" name="Int. Immunol.">
        <title>Crystal structure of the complex of CLEC12A and an antibody that interferes with binding of diverse ligands.</title>
        <authorList>
            <person name="Mori S."/>
            <person name="Nagae M."/>
            <person name="Yamasaki S."/>
        </authorList>
    </citation>
    <scope>X-RAY CRYSTALLOGRAPHY (2.30 ANGSTROMS) OF 132-254</scope>
    <scope>FUNCTION</scope>
    <scope>DISULFIDE BONDS</scope>
    <scope>MUTAGENESIS OF ARG-185; ARG-232 AND TYR-234</scope>
</reference>
<reference evidence="27" key="16">
    <citation type="journal article" date="2024" name="J. Biol. Chem.">
        <title>Mechanistic insights into the C-type lectin receptor CLEC12A-mediated immune recognition of monosodium urate crystal.</title>
        <authorList>
            <person name="Tang H."/>
            <person name="Xiao Y."/>
            <person name="Qian L."/>
            <person name="Wang Z."/>
            <person name="Lu M."/>
            <person name="Yao N."/>
            <person name="Zhou T."/>
            <person name="Tian F."/>
            <person name="Cao L."/>
            <person name="Zheng P."/>
            <person name="Dong X."/>
        </authorList>
    </citation>
    <scope>X-RAY CRYSTALLOGRAPHY (2.58 ANGSTROMS) OF 132-253</scope>
    <scope>FUNCTION</scope>
    <scope>SUBCELLULAR LOCATION</scope>
    <scope>DISULFIDE BONDS</scope>
</reference>
<keyword id="KW-0002">3D-structure</keyword>
<keyword id="KW-0025">Alternative splicing</keyword>
<keyword id="KW-1003">Cell membrane</keyword>
<keyword id="KW-1015">Disulfide bond</keyword>
<keyword id="KW-0325">Glycoprotein</keyword>
<keyword id="KW-0430">Lectin</keyword>
<keyword id="KW-0472">Membrane</keyword>
<keyword id="KW-0597">Phosphoprotein</keyword>
<keyword id="KW-1267">Proteomics identification</keyword>
<keyword id="KW-0675">Receptor</keyword>
<keyword id="KW-1185">Reference proteome</keyword>
<keyword id="KW-0735">Signal-anchor</keyword>
<keyword id="KW-0812">Transmembrane</keyword>
<keyword id="KW-1133">Transmembrane helix</keyword>
<organism>
    <name type="scientific">Homo sapiens</name>
    <name type="common">Human</name>
    <dbReference type="NCBI Taxonomy" id="9606"/>
    <lineage>
        <taxon>Eukaryota</taxon>
        <taxon>Metazoa</taxon>
        <taxon>Chordata</taxon>
        <taxon>Craniata</taxon>
        <taxon>Vertebrata</taxon>
        <taxon>Euteleostomi</taxon>
        <taxon>Mammalia</taxon>
        <taxon>Eutheria</taxon>
        <taxon>Euarchontoglires</taxon>
        <taxon>Primates</taxon>
        <taxon>Haplorrhini</taxon>
        <taxon>Catarrhini</taxon>
        <taxon>Hominidae</taxon>
        <taxon>Homo</taxon>
    </lineage>
</organism>
<dbReference type="EMBL" id="AY547296">
    <property type="protein sequence ID" value="AAT11783.1"/>
    <property type="molecule type" value="mRNA"/>
</dbReference>
<dbReference type="EMBL" id="AY498550">
    <property type="protein sequence ID" value="AAS00605.1"/>
    <property type="molecule type" value="mRNA"/>
</dbReference>
<dbReference type="EMBL" id="AY498551">
    <property type="protein sequence ID" value="AAS00606.1"/>
    <property type="molecule type" value="mRNA"/>
</dbReference>
<dbReference type="EMBL" id="AY498552">
    <property type="protein sequence ID" value="AAS00607.1"/>
    <property type="molecule type" value="mRNA"/>
</dbReference>
<dbReference type="EMBL" id="AY426759">
    <property type="protein sequence ID" value="AAR84594.1"/>
    <property type="molecule type" value="mRNA"/>
</dbReference>
<dbReference type="EMBL" id="AF247788">
    <property type="protein sequence ID" value="AAL95693.1"/>
    <property type="molecule type" value="mRNA"/>
</dbReference>
<dbReference type="EMBL" id="AK314001">
    <property type="protein sequence ID" value="BAG36713.1"/>
    <property type="molecule type" value="mRNA"/>
</dbReference>
<dbReference type="EMBL" id="AC091814">
    <property type="status" value="NOT_ANNOTATED_CDS"/>
    <property type="molecule type" value="Genomic_DNA"/>
</dbReference>
<dbReference type="EMBL" id="CH471094">
    <property type="protein sequence ID" value="EAW96133.1"/>
    <property type="molecule type" value="Genomic_DNA"/>
</dbReference>
<dbReference type="EMBL" id="BC063424">
    <property type="protein sequence ID" value="AAH63424.1"/>
    <property type="molecule type" value="mRNA"/>
</dbReference>
<dbReference type="EMBL" id="BC126289">
    <property type="protein sequence ID" value="AAI26290.1"/>
    <property type="molecule type" value="mRNA"/>
</dbReference>
<dbReference type="EMBL" id="BC126291">
    <property type="protein sequence ID" value="AAI26292.1"/>
    <property type="molecule type" value="mRNA"/>
</dbReference>
<dbReference type="CCDS" id="CCDS55803.1">
    <molecule id="Q5QGZ9-1"/>
</dbReference>
<dbReference type="CCDS" id="CCDS73442.1">
    <molecule id="Q5QGZ9-5"/>
</dbReference>
<dbReference type="CCDS" id="CCDS8608.1">
    <molecule id="Q5QGZ9-2"/>
</dbReference>
<dbReference type="CCDS" id="CCDS8609.1">
    <molecule id="Q5QGZ9-4"/>
</dbReference>
<dbReference type="RefSeq" id="NP_001193939.1">
    <molecule id="Q5QGZ9-1"/>
    <property type="nucleotide sequence ID" value="NM_001207010.2"/>
</dbReference>
<dbReference type="RefSeq" id="NP_001287659.1">
    <molecule id="Q5QGZ9-5"/>
    <property type="nucleotide sequence ID" value="NM_001300730.2"/>
</dbReference>
<dbReference type="RefSeq" id="NP_612210.4">
    <molecule id="Q5QGZ9-2"/>
    <property type="nucleotide sequence ID" value="NM_138337.5"/>
</dbReference>
<dbReference type="RefSeq" id="NP_963917.2">
    <molecule id="Q5QGZ9-4"/>
    <property type="nucleotide sequence ID" value="NM_201623.4"/>
</dbReference>
<dbReference type="RefSeq" id="XP_005253381.1">
    <molecule id="Q5QGZ9-2"/>
    <property type="nucleotide sequence ID" value="XM_005253324.3"/>
</dbReference>
<dbReference type="RefSeq" id="XP_006719099.2">
    <molecule id="Q5QGZ9-5"/>
    <property type="nucleotide sequence ID" value="XM_006719036.4"/>
</dbReference>
<dbReference type="RefSeq" id="XP_011518872.1">
    <molecule id="Q5QGZ9-2"/>
    <property type="nucleotide sequence ID" value="XM_011520570.1"/>
</dbReference>
<dbReference type="RefSeq" id="XP_011518873.3">
    <molecule id="Q5QGZ9-4"/>
    <property type="nucleotide sequence ID" value="XM_011520571.3"/>
</dbReference>
<dbReference type="RefSeq" id="XP_054227202.1">
    <molecule id="Q5QGZ9-5"/>
    <property type="nucleotide sequence ID" value="XM_054371227.1"/>
</dbReference>
<dbReference type="PDB" id="8JAH">
    <property type="method" value="X-ray"/>
    <property type="resolution" value="2.58 A"/>
    <property type="chains" value="A/B=132-253"/>
</dbReference>
<dbReference type="PDB" id="8W8T">
    <property type="method" value="X-ray"/>
    <property type="resolution" value="2.30 A"/>
    <property type="chains" value="A/B=132-254"/>
</dbReference>
<dbReference type="PDB" id="8W9J">
    <property type="method" value="X-ray"/>
    <property type="resolution" value="3.50 A"/>
    <property type="chains" value="C/D=65-265"/>
</dbReference>
<dbReference type="PDBsum" id="8JAH"/>
<dbReference type="PDBsum" id="8W8T"/>
<dbReference type="PDBsum" id="8W9J"/>
<dbReference type="SMR" id="Q5QGZ9"/>
<dbReference type="BioGRID" id="127754">
    <property type="interactions" value="35"/>
</dbReference>
<dbReference type="FunCoup" id="Q5QGZ9">
    <property type="interactions" value="105"/>
</dbReference>
<dbReference type="IntAct" id="Q5QGZ9">
    <property type="interactions" value="30"/>
</dbReference>
<dbReference type="MINT" id="Q5QGZ9"/>
<dbReference type="STRING" id="9606.ENSP00000347916"/>
<dbReference type="GuidetoPHARMACOLOGY" id="3081"/>
<dbReference type="TCDB" id="1.C.111.1.16">
    <property type="family name" value="the regiiiGama (regiiiGama) family"/>
</dbReference>
<dbReference type="GlyCosmos" id="Q5QGZ9">
    <property type="glycosylation" value="3 sites, No reported glycans"/>
</dbReference>
<dbReference type="GlyGen" id="Q5QGZ9">
    <property type="glycosylation" value="3 sites"/>
</dbReference>
<dbReference type="iPTMnet" id="Q5QGZ9"/>
<dbReference type="PhosphoSitePlus" id="Q5QGZ9"/>
<dbReference type="BioMuta" id="CLEC12A"/>
<dbReference type="DMDM" id="308153619"/>
<dbReference type="MassIVE" id="Q5QGZ9"/>
<dbReference type="PaxDb" id="9606-ENSP00000347916"/>
<dbReference type="PeptideAtlas" id="Q5QGZ9"/>
<dbReference type="ProteomicsDB" id="63611">
    <molecule id="Q5QGZ9-2"/>
</dbReference>
<dbReference type="ProteomicsDB" id="63612">
    <molecule id="Q5QGZ9-1"/>
</dbReference>
<dbReference type="ProteomicsDB" id="63613">
    <molecule id="Q5QGZ9-3"/>
</dbReference>
<dbReference type="ProteomicsDB" id="63614">
    <molecule id="Q5QGZ9-4"/>
</dbReference>
<dbReference type="ProteomicsDB" id="63615">
    <molecule id="Q5QGZ9-5"/>
</dbReference>
<dbReference type="ABCD" id="Q5QGZ9">
    <property type="antibodies" value="48 sequenced antibodies"/>
</dbReference>
<dbReference type="Antibodypedia" id="11635">
    <property type="antibodies" value="430 antibodies from 33 providers"/>
</dbReference>
<dbReference type="DNASU" id="160364"/>
<dbReference type="Ensembl" id="ENST00000304361.9">
    <molecule id="Q5QGZ9-2"/>
    <property type="protein sequence ID" value="ENSP00000302804.4"/>
    <property type="gene ID" value="ENSG00000172322.14"/>
</dbReference>
<dbReference type="Ensembl" id="ENST00000350667.4">
    <molecule id="Q5QGZ9-4"/>
    <property type="protein sequence ID" value="ENSP00000345448.4"/>
    <property type="gene ID" value="ENSG00000172322.14"/>
</dbReference>
<dbReference type="Ensembl" id="ENST00000355690.8">
    <molecule id="Q5QGZ9-1"/>
    <property type="protein sequence ID" value="ENSP00000347916.4"/>
    <property type="gene ID" value="ENSG00000172322.14"/>
</dbReference>
<dbReference type="Ensembl" id="ENST00000434319.6">
    <molecule id="Q5QGZ9-5"/>
    <property type="protein sequence ID" value="ENSP00000405244.2"/>
    <property type="gene ID" value="ENSG00000172322.14"/>
</dbReference>
<dbReference type="GeneID" id="160364"/>
<dbReference type="KEGG" id="hsa:160364"/>
<dbReference type="MANE-Select" id="ENST00000304361.9">
    <property type="protein sequence ID" value="ENSP00000302804.4"/>
    <property type="RefSeq nucleotide sequence ID" value="NM_138337.6"/>
    <property type="RefSeq protein sequence ID" value="NP_612210.4"/>
</dbReference>
<dbReference type="UCSC" id="uc001qwq.3">
    <molecule id="Q5QGZ9-2"/>
    <property type="organism name" value="human"/>
</dbReference>
<dbReference type="AGR" id="HGNC:31713"/>
<dbReference type="CTD" id="160364"/>
<dbReference type="DisGeNET" id="160364"/>
<dbReference type="GeneCards" id="CLEC12A"/>
<dbReference type="HGNC" id="HGNC:31713">
    <property type="gene designation" value="CLEC12A"/>
</dbReference>
<dbReference type="HPA" id="ENSG00000172322">
    <property type="expression patterns" value="Tissue enhanced (bone marrow, lymphoid tissue)"/>
</dbReference>
<dbReference type="MIM" id="612088">
    <property type="type" value="gene"/>
</dbReference>
<dbReference type="neXtProt" id="NX_Q5QGZ9"/>
<dbReference type="OpenTargets" id="ENSG00000172322"/>
<dbReference type="PharmGKB" id="PA142672094"/>
<dbReference type="VEuPathDB" id="HostDB:ENSG00000172322"/>
<dbReference type="eggNOG" id="KOG4297">
    <property type="taxonomic scope" value="Eukaryota"/>
</dbReference>
<dbReference type="GeneTree" id="ENSGT00940000162719"/>
<dbReference type="InParanoid" id="Q5QGZ9"/>
<dbReference type="OMA" id="TWMWHED"/>
<dbReference type="OrthoDB" id="10059571at2759"/>
<dbReference type="PAN-GO" id="Q5QGZ9">
    <property type="GO annotations" value="3 GO annotations based on evolutionary models"/>
</dbReference>
<dbReference type="TreeFam" id="TF336674"/>
<dbReference type="PathwayCommons" id="Q5QGZ9"/>
<dbReference type="Reactome" id="R-HSA-6798695">
    <property type="pathway name" value="Neutrophil degranulation"/>
</dbReference>
<dbReference type="SignaLink" id="Q5QGZ9"/>
<dbReference type="BioGRID-ORCS" id="160364">
    <property type="hits" value="11 hits in 1139 CRISPR screens"/>
</dbReference>
<dbReference type="ChiTaRS" id="CLEC12A">
    <property type="organism name" value="human"/>
</dbReference>
<dbReference type="GeneWiki" id="CLEC12A"/>
<dbReference type="GenomeRNAi" id="160364"/>
<dbReference type="Pharos" id="Q5QGZ9">
    <property type="development level" value="Tbio"/>
</dbReference>
<dbReference type="PRO" id="PR:Q5QGZ9"/>
<dbReference type="Proteomes" id="UP000005640">
    <property type="component" value="Chromosome 12"/>
</dbReference>
<dbReference type="RNAct" id="Q5QGZ9">
    <property type="molecule type" value="protein"/>
</dbReference>
<dbReference type="Bgee" id="ENSG00000172322">
    <property type="expression patterns" value="Expressed in monocyte and 111 other cell types or tissues"/>
</dbReference>
<dbReference type="ExpressionAtlas" id="Q5QGZ9">
    <property type="expression patterns" value="baseline and differential"/>
</dbReference>
<dbReference type="GO" id="GO:0005886">
    <property type="term" value="C:plasma membrane"/>
    <property type="evidence" value="ECO:0000314"/>
    <property type="project" value="UniProtKB"/>
</dbReference>
<dbReference type="GO" id="GO:0035579">
    <property type="term" value="C:specific granule membrane"/>
    <property type="evidence" value="ECO:0000304"/>
    <property type="project" value="Reactome"/>
</dbReference>
<dbReference type="GO" id="GO:0070821">
    <property type="term" value="C:tertiary granule membrane"/>
    <property type="evidence" value="ECO:0000304"/>
    <property type="project" value="Reactome"/>
</dbReference>
<dbReference type="GO" id="GO:0030246">
    <property type="term" value="F:carbohydrate binding"/>
    <property type="evidence" value="ECO:0007669"/>
    <property type="project" value="UniProtKB-KW"/>
</dbReference>
<dbReference type="GO" id="GO:0038187">
    <property type="term" value="F:pattern recognition receptor activity"/>
    <property type="evidence" value="ECO:0000314"/>
    <property type="project" value="UniProtKB"/>
</dbReference>
<dbReference type="GO" id="GO:0030545">
    <property type="term" value="F:signaling receptor regulator activity"/>
    <property type="evidence" value="ECO:0007669"/>
    <property type="project" value="InterPro"/>
</dbReference>
<dbReference type="GO" id="GO:0004888">
    <property type="term" value="F:transmembrane signaling receptor activity"/>
    <property type="evidence" value="ECO:0000314"/>
    <property type="project" value="UniProtKB"/>
</dbReference>
<dbReference type="GO" id="GO:2001199">
    <property type="term" value="P:negative regulation of dendritic cell differentiation"/>
    <property type="evidence" value="ECO:0000314"/>
    <property type="project" value="UniProtKB"/>
</dbReference>
<dbReference type="GO" id="GO:0050777">
    <property type="term" value="P:negative regulation of immune response"/>
    <property type="evidence" value="ECO:0000314"/>
    <property type="project" value="UniProtKB"/>
</dbReference>
<dbReference type="GO" id="GO:0050728">
    <property type="term" value="P:negative regulation of inflammatory response"/>
    <property type="evidence" value="ECO:0000250"/>
    <property type="project" value="UniProtKB"/>
</dbReference>
<dbReference type="GO" id="GO:0032815">
    <property type="term" value="P:negative regulation of natural killer cell activation"/>
    <property type="evidence" value="ECO:0000315"/>
    <property type="project" value="UniProtKB"/>
</dbReference>
<dbReference type="GO" id="GO:1902564">
    <property type="term" value="P:negative regulation of neutrophil activation"/>
    <property type="evidence" value="ECO:0000314"/>
    <property type="project" value="UniProtKB"/>
</dbReference>
<dbReference type="GO" id="GO:0032481">
    <property type="term" value="P:positive regulation of type I interferon production"/>
    <property type="evidence" value="ECO:0000250"/>
    <property type="project" value="UniProtKB"/>
</dbReference>
<dbReference type="GO" id="GO:0007165">
    <property type="term" value="P:signal transduction"/>
    <property type="evidence" value="ECO:0000318"/>
    <property type="project" value="GO_Central"/>
</dbReference>
<dbReference type="CDD" id="cd03593">
    <property type="entry name" value="CLECT_NK_receptors_like"/>
    <property type="match status" value="1"/>
</dbReference>
<dbReference type="FunFam" id="3.10.100.10:FF:000245">
    <property type="match status" value="1"/>
</dbReference>
<dbReference type="Gene3D" id="3.10.100.10">
    <property type="entry name" value="Mannose-Binding Protein A, subunit A"/>
    <property type="match status" value="1"/>
</dbReference>
<dbReference type="InterPro" id="IPR001304">
    <property type="entry name" value="C-type_lectin-like"/>
</dbReference>
<dbReference type="InterPro" id="IPR016186">
    <property type="entry name" value="C-type_lectin-like/link_sf"/>
</dbReference>
<dbReference type="InterPro" id="IPR042916">
    <property type="entry name" value="CLEC12A/B"/>
</dbReference>
<dbReference type="InterPro" id="IPR016187">
    <property type="entry name" value="CTDL_fold"/>
</dbReference>
<dbReference type="InterPro" id="IPR033992">
    <property type="entry name" value="NKR-like_CTLD"/>
</dbReference>
<dbReference type="PANTHER" id="PTHR47647:SF2">
    <property type="entry name" value="C-TYPE LECTIN DOMAIN FAMILY 12 MEMBER A"/>
    <property type="match status" value="1"/>
</dbReference>
<dbReference type="PANTHER" id="PTHR47647">
    <property type="entry name" value="C-TYPE LECTIN DOMAIN FAMILY 12 MEMBER B"/>
    <property type="match status" value="1"/>
</dbReference>
<dbReference type="Pfam" id="PF00059">
    <property type="entry name" value="Lectin_C"/>
    <property type="match status" value="1"/>
</dbReference>
<dbReference type="SMART" id="SM00034">
    <property type="entry name" value="CLECT"/>
    <property type="match status" value="1"/>
</dbReference>
<dbReference type="SUPFAM" id="SSF56436">
    <property type="entry name" value="C-type lectin-like"/>
    <property type="match status" value="1"/>
</dbReference>
<dbReference type="PROSITE" id="PS50041">
    <property type="entry name" value="C_TYPE_LECTIN_2"/>
    <property type="match status" value="1"/>
</dbReference>
<gene>
    <name evidence="24 26" type="primary">CLEC12A</name>
    <name evidence="22" type="synonym">CLL1</name>
    <name evidence="23" type="synonym">DCAL2</name>
    <name evidence="20" type="synonym">KLRL1</name>
    <name evidence="19" type="synonym">MICL</name>
</gene>
<feature type="chain" id="PRO_0000313578" description="C-type lectin domain family 12 member A">
    <location>
        <begin position="1"/>
        <end position="265"/>
    </location>
</feature>
<feature type="topological domain" description="Cytoplasmic" evidence="2">
    <location>
        <begin position="1"/>
        <end position="43"/>
    </location>
</feature>
<feature type="transmembrane region" description="Helical; Signal-anchor for type II membrane protein" evidence="2">
    <location>
        <begin position="44"/>
        <end position="64"/>
    </location>
</feature>
<feature type="topological domain" description="Extracellular" evidence="2">
    <location>
        <begin position="65"/>
        <end position="265"/>
    </location>
</feature>
<feature type="domain" description="C-type lectin" evidence="3">
    <location>
        <begin position="140"/>
        <end position="249"/>
    </location>
</feature>
<feature type="short sequence motif" description="ITIM motif" evidence="5 13">
    <location>
        <begin position="5"/>
        <end position="10"/>
    </location>
</feature>
<feature type="modified residue" description="Phosphotyrosine" evidence="13">
    <location>
        <position position="7"/>
    </location>
</feature>
<feature type="glycosylation site" description="N-linked (GlcNAc...) asparagine" evidence="2">
    <location>
        <position position="88"/>
    </location>
</feature>
<feature type="glycosylation site" description="N-linked (GlcNAc...) asparagine" evidence="10">
    <location>
        <position position="98"/>
    </location>
</feature>
<feature type="glycosylation site" description="N-linked (GlcNAc...) asparagine" evidence="2">
    <location>
        <position position="165"/>
    </location>
</feature>
<feature type="disulfide bond" evidence="16 29">
    <location>
        <begin position="118"/>
        <end position="130"/>
    </location>
</feature>
<feature type="disulfide bond" evidence="15 16 27 28 29">
    <location>
        <begin position="133"/>
        <end position="144"/>
    </location>
</feature>
<feature type="disulfide bond" evidence="3 15 16 27 28 29">
    <location>
        <begin position="161"/>
        <end position="248"/>
    </location>
</feature>
<feature type="disulfide bond" evidence="3 15 16 27 28 29">
    <location>
        <begin position="227"/>
        <end position="240"/>
    </location>
</feature>
<feature type="splice variant" id="VSP_039854" description="In isoform 1." evidence="22">
    <original>M</original>
    <variation>MWIDFFTYSSM</variation>
    <location>
        <position position="1"/>
    </location>
</feature>
<feature type="splice variant" id="VSP_030030" description="In isoform 4." evidence="19">
    <original>APPAPSHVWRPAALFLTLLCLLLLIGLGVLASMF</original>
    <variation>V</variation>
    <location>
        <begin position="31"/>
        <end position="64"/>
    </location>
</feature>
<feature type="splice variant" id="VSP_030031" description="In isoform 3." evidence="19">
    <original>FHVTLKIEMKKMNKLQNI</original>
    <variation>CMYCPCFGQEEVSRISNI</variation>
    <location>
        <begin position="64"/>
        <end position="81"/>
    </location>
</feature>
<feature type="splice variant" id="VSP_030032" description="In isoform 3." evidence="19">
    <location>
        <begin position="82"/>
        <end position="265"/>
    </location>
</feature>
<feature type="splice variant" id="VSP_030033" description="In isoform 5." evidence="21">
    <location>
        <begin position="214"/>
        <end position="265"/>
    </location>
</feature>
<feature type="sequence variant" id="VAR_037669" description="In dbSNP:rs479499." evidence="4 5 6 7 9 18">
    <original>K</original>
    <variation>Q</variation>
    <location>
        <position position="244"/>
    </location>
</feature>
<feature type="mutagenesis site" description="Abolished phosphorylation." evidence="13">
    <original>Y</original>
    <variation>F</variation>
    <location>
        <position position="7"/>
    </location>
</feature>
<feature type="mutagenesis site" description="Strongly decreased ligand-binding." evidence="16">
    <original>R</original>
    <variation>A</variation>
    <location>
        <position position="185"/>
    </location>
</feature>
<feature type="mutagenesis site" description="Decreased ligand-binding." evidence="16">
    <original>R</original>
    <variation>A</variation>
    <location>
        <position position="232"/>
    </location>
</feature>
<feature type="mutagenesis site" description="Decreased ligand-binding." evidence="16">
    <original>Y</original>
    <variation>A</variation>
    <location>
        <position position="234"/>
    </location>
</feature>
<feature type="helix" evidence="31">
    <location>
        <begin position="101"/>
        <end position="124"/>
    </location>
</feature>
<feature type="strand" evidence="30">
    <location>
        <begin position="138"/>
        <end position="140"/>
    </location>
</feature>
<feature type="strand" evidence="30">
    <location>
        <begin position="143"/>
        <end position="147"/>
    </location>
</feature>
<feature type="helix" evidence="30">
    <location>
        <begin position="154"/>
        <end position="163"/>
    </location>
</feature>
<feature type="helix" evidence="30">
    <location>
        <begin position="174"/>
        <end position="183"/>
    </location>
</feature>
<feature type="strand" evidence="30">
    <location>
        <begin position="186"/>
        <end position="190"/>
    </location>
</feature>
<feature type="strand" evidence="30">
    <location>
        <begin position="196"/>
        <end position="198"/>
    </location>
</feature>
<feature type="helix" evidence="30">
    <location>
        <begin position="205"/>
        <end position="207"/>
    </location>
</feature>
<feature type="helix" evidence="30">
    <location>
        <begin position="212"/>
        <end position="214"/>
    </location>
</feature>
<feature type="helix" evidence="30">
    <location>
        <begin position="222"/>
        <end position="224"/>
    </location>
</feature>
<feature type="strand" evidence="30">
    <location>
        <begin position="225"/>
        <end position="231"/>
    </location>
</feature>
<feature type="strand" evidence="30">
    <location>
        <begin position="234"/>
        <end position="239"/>
    </location>
</feature>
<feature type="strand" evidence="30">
    <location>
        <begin position="244"/>
        <end position="251"/>
    </location>
</feature>
<comment type="function">
    <text evidence="1 5 6 9 12 13 14 15 16 17">Myeloid inhibitory C-type lectin receptor that acts as a negative regulator of myeloid cell activation (PubMed:14739280, PubMed:15238421, PubMed:16239426, PubMed:34234773, PubMed:38367667, PubMed:38386511, PubMed:39143217). Myeloid cell inhibition is required to limit proinflammatory pathways and protect against excessive inflammation (By similarity). Specifically recognizes and binds various structures, such as neutrophil extracellular traps (NETs) or monosodium urate crystals (PubMed:38367667, PubMed:38386511, PubMed:39143217). Also acts as a pattern-recognition receptor for pathogen-associated molecules, such as plasmodium hemozoin or mycobacterial micolic acid (PubMed:31269448, PubMed:36542980). Ligand-binding induces phosphorylation of its ITIM motif, followed by recruitment of tyrosine-protein phosphatases PTPN6 and PTPN11, which counteract tyrosine-protein kinase SYK, thereby preventing myeloid cell activation (PubMed:14739280, PubMed:16239426, PubMed:34234773). Acts as a pattern-recognition receptor for NETs in neutrophils: specifically recognizes DNA in NETs, leading to inhibit neutrophil activation and limit further NET formation (PubMed:39143217). This regulation is essential for controlling key neutrophil responses and limit NET-mediated inflammatory conditions (By similarity). Also recognizes dead cells by acting as a receptor for monosodium urate crystals, leading to down-regulate neutrophil activation (PubMed:38367667, PubMed:38386511). Binding to monosodium urate crystals also promotes the type I interferon response (By similarity). Acts as an inhibitor of natural killer (NK) cell cytotoxicity (PubMed:15238421). Also acts as an ihibitor of dendritic cell maturation in an IL10-dependent manner (PubMed:16239426).</text>
</comment>
<comment type="subunit">
    <text evidence="1 5">Homodimer; disulfide-linked (By similarity). Interacts (when the ITIM motif is phosphorylated) with PTPN6 and PTPN11 (PubMed:14739280).</text>
</comment>
<comment type="interaction">
    <interactant intactId="EBI-13335829">
        <id>Q5QGZ9</id>
    </interactant>
    <interactant intactId="EBI-11996768">
        <id>Q8NC01</id>
        <label>CLEC1A</label>
    </interactant>
    <organismsDiffer>false</organismsDiffer>
    <experiments>3</experiments>
</comment>
<comment type="subcellular location">
    <subcellularLocation>
        <location evidence="5 6 8 9 11 13 15">Cell membrane</location>
        <topology evidence="2">Single-pass type II membrane protein</topology>
    </subcellularLocation>
    <text evidence="9 15">Ligand binding leads to internalization (PubMed:16239426). Clusters at phagocytic vesicles upon monosodium urate crystal-binding (PubMed:38367667).</text>
</comment>
<comment type="alternative products">
    <event type="alternative splicing"/>
    <isoform>
        <id>Q5QGZ9-2</id>
        <name>2</name>
        <name>Alpha</name>
        <sequence type="displayed"/>
    </isoform>
    <isoform>
        <id>Q5QGZ9-1</id>
        <name>1</name>
        <sequence type="described" ref="VSP_039854"/>
    </isoform>
    <isoform>
        <id>Q5QGZ9-3</id>
        <name>3</name>
        <name>Gamma</name>
        <sequence type="described" ref="VSP_030031 VSP_030032"/>
    </isoform>
    <isoform>
        <id>Q5QGZ9-4</id>
        <name>4</name>
        <name>Beta</name>
        <sequence type="described" ref="VSP_030030"/>
    </isoform>
    <isoform>
        <id>Q5QGZ9-5</id>
        <name>5</name>
        <sequence type="described" ref="VSP_030033"/>
    </isoform>
</comment>
<comment type="tissue specificity">
    <text evidence="5 6 8 9 11">Preferentially expressed in lymphoid tissues and immune cells, including natural killer (NK) cells, T-cells, dendritic cells and monocytes or macrophages (PubMed:14739280, PubMed:15238421, PubMed:15548716, PubMed:16239426, PubMed:16838277). Detected in spleen macrophage-rich red pulp and in lymph node (at protein level) (PubMed:16838277). Detected in peripheral blood leukocytes, dendritic cells, bone marrow, monocytes, mononuclear leukocytes and macrophages (PubMed:16838277).</text>
</comment>
<comment type="induction">
    <text evidence="11">Down-regulated in activated leukocytes recruited to a site of inflammation.</text>
</comment>
<comment type="domain">
    <text evidence="5">The immunoreceptor tyrosine-based inhibitor motif (ITIM) is involved in modulation of cellular responses (PubMed:14739280). The phosphorylated ITIM motif can bind the SH2 domain of several SH2-containing protein phosphatases, such as PTPN6 and PTPN11 (PubMed:14739280).</text>
</comment>
<comment type="PTM">
    <text evidence="5 6 9 13">Phosphorylated at Tyr-7 by SRC in the ITIM motif following ligand-binding, promoting recruitment of tyrosine-protein phosphatases PTPN6 and PTPN11.</text>
</comment>
<comment type="PTM">
    <text evidence="5 6 10 11">Highly N-glycosylated; glycosylation varies between cell types.</text>
</comment>
<comment type="miscellaneous">
    <molecule>Isoform 3</molecule>
    <text evidence="25">May be produced at very low levels due to a premature stop codon in the mRNA, leading to nonsense-mediated mRNA decay.</text>
</comment>
<proteinExistence type="evidence at protein level"/>
<evidence type="ECO:0000250" key="1">
    <source>
        <dbReference type="UniProtKB" id="Q504P2"/>
    </source>
</evidence>
<evidence type="ECO:0000255" key="2"/>
<evidence type="ECO:0000255" key="3">
    <source>
        <dbReference type="PROSITE-ProRule" id="PRU00040"/>
    </source>
</evidence>
<evidence type="ECO:0000269" key="4">
    <source>
    </source>
</evidence>
<evidence type="ECO:0000269" key="5">
    <source>
    </source>
</evidence>
<evidence type="ECO:0000269" key="6">
    <source>
    </source>
</evidence>
<evidence type="ECO:0000269" key="7">
    <source>
    </source>
</evidence>
<evidence type="ECO:0000269" key="8">
    <source>
    </source>
</evidence>
<evidence type="ECO:0000269" key="9">
    <source>
    </source>
</evidence>
<evidence type="ECO:0000269" key="10">
    <source>
    </source>
</evidence>
<evidence type="ECO:0000269" key="11">
    <source>
    </source>
</evidence>
<evidence type="ECO:0000269" key="12">
    <source>
    </source>
</evidence>
<evidence type="ECO:0000269" key="13">
    <source>
    </source>
</evidence>
<evidence type="ECO:0000269" key="14">
    <source>
    </source>
</evidence>
<evidence type="ECO:0000269" key="15">
    <source>
    </source>
</evidence>
<evidence type="ECO:0000269" key="16">
    <source>
    </source>
</evidence>
<evidence type="ECO:0000269" key="17">
    <source>
    </source>
</evidence>
<evidence type="ECO:0000269" key="18">
    <source ref="7"/>
</evidence>
<evidence type="ECO:0000303" key="19">
    <source>
    </source>
</evidence>
<evidence type="ECO:0000303" key="20">
    <source>
    </source>
</evidence>
<evidence type="ECO:0000303" key="21">
    <source>
    </source>
</evidence>
<evidence type="ECO:0000303" key="22">
    <source>
    </source>
</evidence>
<evidence type="ECO:0000303" key="23">
    <source>
    </source>
</evidence>
<evidence type="ECO:0000303" key="24">
    <source>
    </source>
</evidence>
<evidence type="ECO:0000305" key="25"/>
<evidence type="ECO:0000312" key="26">
    <source>
        <dbReference type="HGNC" id="HGNC:31713"/>
    </source>
</evidence>
<evidence type="ECO:0007744" key="27">
    <source>
        <dbReference type="PDB" id="8JAH"/>
    </source>
</evidence>
<evidence type="ECO:0007744" key="28">
    <source>
        <dbReference type="PDB" id="8W8T"/>
    </source>
</evidence>
<evidence type="ECO:0007744" key="29">
    <source>
        <dbReference type="PDB" id="8W9J"/>
    </source>
</evidence>
<evidence type="ECO:0007829" key="30">
    <source>
        <dbReference type="PDB" id="8W8T"/>
    </source>
</evidence>
<evidence type="ECO:0007829" key="31">
    <source>
        <dbReference type="PDB" id="8W9J"/>
    </source>
</evidence>
<accession>Q5QGZ9</accession>
<accession>B2RA16</accession>
<accession>Q6P4H1</accession>
<accession>Q6RH77</accession>
<accession>Q6RH78</accession>
<accession>Q8TDQ6</accession>
<sequence>MSEEVTYADLQFQNSSEMEKIPEIGKFGEKAPPAPSHVWRPAALFLTLLCLLLLIGLGVLASMFHVTLKIEMKKMNKLQNISEELQRNISLQLMSNMNISNKIRNLSTTLQTIATKLCRELYSKEQEHKCKPCPRRWIWHKDSCYFLSDDVQTWQESKMACAAQNASLLKINNKNALEFIKSQSRSYDYWLGLSPEEDSTRGMRVDNIINSSAWVIRNAPDLNNMYCGYINRLYVQYYHCTYKKRMICEKMANPVQLGSTYFREA</sequence>
<protein>
    <recommendedName>
        <fullName evidence="25">C-type lectin domain family 12 member A</fullName>
    </recommendedName>
    <alternativeName>
        <fullName evidence="22">C-type lectin-like molecule 1</fullName>
        <shortName evidence="22">CLL-1</shortName>
    </alternativeName>
    <alternativeName>
        <fullName evidence="23">Dendritic cell-associated lectin 2</fullName>
        <shortName evidence="23">DCAL-2</shortName>
    </alternativeName>
    <alternativeName>
        <fullName evidence="20">Killer cell C-type lectin-like receptor L1</fullName>
        <shortName evidence="20">hKLRL1</shortName>
    </alternativeName>
    <alternativeName>
        <fullName evidence="19">Myeloid inhibitory C-type lectin-like receptor</fullName>
        <shortName evidence="19">MICL</shortName>
    </alternativeName>
    <cdAntigenName>CD371</cdAntigenName>
</protein>
<name>CL12A_HUMAN</name>